<feature type="chain" id="PRO_1000186737" description="Fe/S biogenesis protein NfuA">
    <location>
        <begin position="1"/>
        <end position="190"/>
    </location>
</feature>
<feature type="binding site" evidence="1">
    <location>
        <position position="148"/>
    </location>
    <ligand>
        <name>[4Fe-4S] cluster</name>
        <dbReference type="ChEBI" id="CHEBI:49883"/>
    </ligand>
</feature>
<feature type="binding site" evidence="1">
    <location>
        <position position="151"/>
    </location>
    <ligand>
        <name>[4Fe-4S] cluster</name>
        <dbReference type="ChEBI" id="CHEBI:49883"/>
    </ligand>
</feature>
<comment type="function">
    <text evidence="1">Involved in iron-sulfur cluster biogenesis. Binds a 4Fe-4S cluster, can transfer this cluster to apoproteins, and thereby intervenes in the maturation of Fe/S proteins. Could also act as a scaffold/chaperone for damaged Fe/S proteins.</text>
</comment>
<comment type="cofactor">
    <cofactor evidence="1">
        <name>[4Fe-4S] cluster</name>
        <dbReference type="ChEBI" id="CHEBI:49883"/>
    </cofactor>
    <text evidence="1">Binds 1 [4Fe-4S] cluster per subunit. The cluster is presumably bound at the interface of two monomers.</text>
</comment>
<comment type="subunit">
    <text evidence="1">Homodimer.</text>
</comment>
<comment type="similarity">
    <text evidence="1">Belongs to the NfuA family.</text>
</comment>
<keyword id="KW-0004">4Fe-4S</keyword>
<keyword id="KW-0408">Iron</keyword>
<keyword id="KW-0411">Iron-sulfur</keyword>
<keyword id="KW-0479">Metal-binding</keyword>
<keyword id="KW-1185">Reference proteome</keyword>
<name>NFUA_BAUCH</name>
<protein>
    <recommendedName>
        <fullName evidence="1">Fe/S biogenesis protein NfuA</fullName>
    </recommendedName>
</protein>
<dbReference type="EMBL" id="CP000238">
    <property type="protein sequence ID" value="ABF13908.1"/>
    <property type="molecule type" value="Genomic_DNA"/>
</dbReference>
<dbReference type="RefSeq" id="WP_011520654.1">
    <property type="nucleotide sequence ID" value="NC_007984.1"/>
</dbReference>
<dbReference type="SMR" id="Q1LSZ3"/>
<dbReference type="STRING" id="374463.BCI_0484"/>
<dbReference type="KEGG" id="bci:BCI_0484"/>
<dbReference type="HOGENOM" id="CLU_094569_0_0_6"/>
<dbReference type="OrthoDB" id="9785450at2"/>
<dbReference type="Proteomes" id="UP000002427">
    <property type="component" value="Chromosome"/>
</dbReference>
<dbReference type="GO" id="GO:0051539">
    <property type="term" value="F:4 iron, 4 sulfur cluster binding"/>
    <property type="evidence" value="ECO:0007669"/>
    <property type="project" value="UniProtKB-UniRule"/>
</dbReference>
<dbReference type="GO" id="GO:0005506">
    <property type="term" value="F:iron ion binding"/>
    <property type="evidence" value="ECO:0007669"/>
    <property type="project" value="InterPro"/>
</dbReference>
<dbReference type="GO" id="GO:0016226">
    <property type="term" value="P:iron-sulfur cluster assembly"/>
    <property type="evidence" value="ECO:0007669"/>
    <property type="project" value="UniProtKB-UniRule"/>
</dbReference>
<dbReference type="GO" id="GO:0051604">
    <property type="term" value="P:protein maturation"/>
    <property type="evidence" value="ECO:0007669"/>
    <property type="project" value="UniProtKB-UniRule"/>
</dbReference>
<dbReference type="Gene3D" id="3.30.300.130">
    <property type="entry name" value="Fe-S cluster assembly (FSCA)"/>
    <property type="match status" value="1"/>
</dbReference>
<dbReference type="Gene3D" id="2.60.300.12">
    <property type="entry name" value="HesB-like domain"/>
    <property type="match status" value="1"/>
</dbReference>
<dbReference type="HAMAP" id="MF_01637">
    <property type="entry name" value="Fe_S_biogen_NfuA"/>
    <property type="match status" value="1"/>
</dbReference>
<dbReference type="InterPro" id="IPR017726">
    <property type="entry name" value="Fe/S_biogenesis_protein_NfuA"/>
</dbReference>
<dbReference type="InterPro" id="IPR000361">
    <property type="entry name" value="FeS_biogenesis"/>
</dbReference>
<dbReference type="InterPro" id="IPR034904">
    <property type="entry name" value="FSCA_dom_sf"/>
</dbReference>
<dbReference type="InterPro" id="IPR035903">
    <property type="entry name" value="HesB-like_dom_sf"/>
</dbReference>
<dbReference type="InterPro" id="IPR001075">
    <property type="entry name" value="NIF_FeS_clus_asmbl_NifU_C"/>
</dbReference>
<dbReference type="NCBIfam" id="TIGR03341">
    <property type="entry name" value="YhgI_GntY"/>
    <property type="match status" value="1"/>
</dbReference>
<dbReference type="PANTHER" id="PTHR11178:SF51">
    <property type="entry name" value="FE_S BIOGENESIS PROTEIN NFUA"/>
    <property type="match status" value="1"/>
</dbReference>
<dbReference type="PANTHER" id="PTHR11178">
    <property type="entry name" value="IRON-SULFUR CLUSTER SCAFFOLD PROTEIN NFU-RELATED"/>
    <property type="match status" value="1"/>
</dbReference>
<dbReference type="Pfam" id="PF01521">
    <property type="entry name" value="Fe-S_biosyn"/>
    <property type="match status" value="1"/>
</dbReference>
<dbReference type="Pfam" id="PF01106">
    <property type="entry name" value="NifU"/>
    <property type="match status" value="1"/>
</dbReference>
<dbReference type="SUPFAM" id="SSF117916">
    <property type="entry name" value="Fe-S cluster assembly (FSCA) domain-like"/>
    <property type="match status" value="1"/>
</dbReference>
<dbReference type="SUPFAM" id="SSF89360">
    <property type="entry name" value="HesB-like domain"/>
    <property type="match status" value="1"/>
</dbReference>
<organism>
    <name type="scientific">Baumannia cicadellinicola subsp. Homalodisca coagulata</name>
    <dbReference type="NCBI Taxonomy" id="374463"/>
    <lineage>
        <taxon>Bacteria</taxon>
        <taxon>Pseudomonadati</taxon>
        <taxon>Pseudomonadota</taxon>
        <taxon>Gammaproteobacteria</taxon>
        <taxon>Candidatus Palibaumannia</taxon>
    </lineage>
</organism>
<gene>
    <name evidence="1" type="primary">nfuA</name>
    <name type="ordered locus">BCI_0484</name>
</gene>
<proteinExistence type="inferred from homology"/>
<evidence type="ECO:0000255" key="1">
    <source>
        <dbReference type="HAMAP-Rule" id="MF_01637"/>
    </source>
</evidence>
<accession>Q1LSZ3</accession>
<sequence length="190" mass="21282">MIIITDTAQKYLTTLLAKQKSGTQIRVLVLNPGTPIAECSLSYCPIDTVTKKDIKLEFDQFCVYVDQLSTSYLEDALIDCVLDELGTQLIIQAPHLIEKIDSNTPLLERVNQIILSCINPQLANHGGKVTLITITEDMFAIIQFSGGCNGCSMVSYTLKEHIEKKLLQLFPELKGVKDLTQHNHSQYSFY</sequence>
<reference key="1">
    <citation type="journal article" date="2006" name="PLoS Biol.">
        <title>Metabolic complementarity and genomics of the dual bacterial symbiosis of sharpshooters.</title>
        <authorList>
            <person name="Wu D."/>
            <person name="Daugherty S.C."/>
            <person name="Van Aken S.E."/>
            <person name="Pai G.H."/>
            <person name="Watkins K.L."/>
            <person name="Khouri H."/>
            <person name="Tallon L.J."/>
            <person name="Zaborsky J.M."/>
            <person name="Dunbar H.E."/>
            <person name="Tran P.L."/>
            <person name="Moran N.A."/>
            <person name="Eisen J.A."/>
        </authorList>
    </citation>
    <scope>NUCLEOTIDE SEQUENCE [LARGE SCALE GENOMIC DNA]</scope>
</reference>